<protein>
    <recommendedName>
        <fullName evidence="1">Anthranilate phosphoribosyltransferase</fullName>
        <ecNumber evidence="1">2.4.2.18</ecNumber>
    </recommendedName>
</protein>
<feature type="chain" id="PRO_1000043040" description="Anthranilate phosphoribosyltransferase">
    <location>
        <begin position="1"/>
        <end position="337"/>
    </location>
</feature>
<feature type="binding site" evidence="1">
    <location>
        <position position="81"/>
    </location>
    <ligand>
        <name>5-phospho-alpha-D-ribose 1-diphosphate</name>
        <dbReference type="ChEBI" id="CHEBI:58017"/>
    </ligand>
</feature>
<feature type="binding site" evidence="1">
    <location>
        <position position="81"/>
    </location>
    <ligand>
        <name>anthranilate</name>
        <dbReference type="ChEBI" id="CHEBI:16567"/>
        <label>1</label>
    </ligand>
</feature>
<feature type="binding site" evidence="1">
    <location>
        <begin position="84"/>
        <end position="85"/>
    </location>
    <ligand>
        <name>5-phospho-alpha-D-ribose 1-diphosphate</name>
        <dbReference type="ChEBI" id="CHEBI:58017"/>
    </ligand>
</feature>
<feature type="binding site" evidence="1">
    <location>
        <position position="89"/>
    </location>
    <ligand>
        <name>5-phospho-alpha-D-ribose 1-diphosphate</name>
        <dbReference type="ChEBI" id="CHEBI:58017"/>
    </ligand>
</feature>
<feature type="binding site" evidence="1">
    <location>
        <begin position="91"/>
        <end position="94"/>
    </location>
    <ligand>
        <name>5-phospho-alpha-D-ribose 1-diphosphate</name>
        <dbReference type="ChEBI" id="CHEBI:58017"/>
    </ligand>
</feature>
<feature type="binding site" evidence="1">
    <location>
        <position position="93"/>
    </location>
    <ligand>
        <name>Mg(2+)</name>
        <dbReference type="ChEBI" id="CHEBI:18420"/>
        <label>1</label>
    </ligand>
</feature>
<feature type="binding site" evidence="1">
    <location>
        <begin position="109"/>
        <end position="117"/>
    </location>
    <ligand>
        <name>5-phospho-alpha-D-ribose 1-diphosphate</name>
        <dbReference type="ChEBI" id="CHEBI:58017"/>
    </ligand>
</feature>
<feature type="binding site" evidence="1">
    <location>
        <position position="112"/>
    </location>
    <ligand>
        <name>anthranilate</name>
        <dbReference type="ChEBI" id="CHEBI:16567"/>
        <label>1</label>
    </ligand>
</feature>
<feature type="binding site" evidence="1">
    <location>
        <position position="121"/>
    </location>
    <ligand>
        <name>5-phospho-alpha-D-ribose 1-diphosphate</name>
        <dbReference type="ChEBI" id="CHEBI:58017"/>
    </ligand>
</feature>
<feature type="binding site" evidence="1">
    <location>
        <position position="167"/>
    </location>
    <ligand>
        <name>anthranilate</name>
        <dbReference type="ChEBI" id="CHEBI:16567"/>
        <label>2</label>
    </ligand>
</feature>
<feature type="binding site" evidence="1">
    <location>
        <position position="226"/>
    </location>
    <ligand>
        <name>Mg(2+)</name>
        <dbReference type="ChEBI" id="CHEBI:18420"/>
        <label>2</label>
    </ligand>
</feature>
<feature type="binding site" evidence="1">
    <location>
        <position position="227"/>
    </location>
    <ligand>
        <name>Mg(2+)</name>
        <dbReference type="ChEBI" id="CHEBI:18420"/>
        <label>1</label>
    </ligand>
</feature>
<feature type="binding site" evidence="1">
    <location>
        <position position="227"/>
    </location>
    <ligand>
        <name>Mg(2+)</name>
        <dbReference type="ChEBI" id="CHEBI:18420"/>
        <label>2</label>
    </ligand>
</feature>
<reference key="1">
    <citation type="submission" date="2006-03" db="EMBL/GenBank/DDBJ databases">
        <title>Complete sequence of chromosome of Nitrobacter hamburgensis X14.</title>
        <authorList>
            <consortium name="US DOE Joint Genome Institute"/>
            <person name="Copeland A."/>
            <person name="Lucas S."/>
            <person name="Lapidus A."/>
            <person name="Barry K."/>
            <person name="Detter J.C."/>
            <person name="Glavina del Rio T."/>
            <person name="Hammon N."/>
            <person name="Israni S."/>
            <person name="Dalin E."/>
            <person name="Tice H."/>
            <person name="Pitluck S."/>
            <person name="Chain P."/>
            <person name="Malfatti S."/>
            <person name="Shin M."/>
            <person name="Vergez L."/>
            <person name="Schmutz J."/>
            <person name="Larimer F."/>
            <person name="Land M."/>
            <person name="Hauser L."/>
            <person name="Kyrpides N."/>
            <person name="Ivanova N."/>
            <person name="Ward B."/>
            <person name="Arp D."/>
            <person name="Klotz M."/>
            <person name="Stein L."/>
            <person name="O'Mullan G."/>
            <person name="Starkenburg S."/>
            <person name="Sayavedra L."/>
            <person name="Poret-Peterson A.T."/>
            <person name="Gentry M.E."/>
            <person name="Bruce D."/>
            <person name="Richardson P."/>
        </authorList>
    </citation>
    <scope>NUCLEOTIDE SEQUENCE [LARGE SCALE GENOMIC DNA]</scope>
    <source>
        <strain>DSM 10229 / NCIMB 13809 / X14</strain>
    </source>
</reference>
<name>TRPD_NITHX</name>
<gene>
    <name evidence="1" type="primary">trpD</name>
    <name type="ordered locus">Nham_1734</name>
</gene>
<keyword id="KW-0028">Amino-acid biosynthesis</keyword>
<keyword id="KW-0057">Aromatic amino acid biosynthesis</keyword>
<keyword id="KW-0328">Glycosyltransferase</keyword>
<keyword id="KW-0460">Magnesium</keyword>
<keyword id="KW-0479">Metal-binding</keyword>
<keyword id="KW-1185">Reference proteome</keyword>
<keyword id="KW-0808">Transferase</keyword>
<keyword id="KW-0822">Tryptophan biosynthesis</keyword>
<evidence type="ECO:0000255" key="1">
    <source>
        <dbReference type="HAMAP-Rule" id="MF_00211"/>
    </source>
</evidence>
<comment type="function">
    <text evidence="1">Catalyzes the transfer of the phosphoribosyl group of 5-phosphorylribose-1-pyrophosphate (PRPP) to anthranilate to yield N-(5'-phosphoribosyl)-anthranilate (PRA).</text>
</comment>
<comment type="catalytic activity">
    <reaction evidence="1">
        <text>N-(5-phospho-beta-D-ribosyl)anthranilate + diphosphate = 5-phospho-alpha-D-ribose 1-diphosphate + anthranilate</text>
        <dbReference type="Rhea" id="RHEA:11768"/>
        <dbReference type="ChEBI" id="CHEBI:16567"/>
        <dbReference type="ChEBI" id="CHEBI:18277"/>
        <dbReference type="ChEBI" id="CHEBI:33019"/>
        <dbReference type="ChEBI" id="CHEBI:58017"/>
        <dbReference type="EC" id="2.4.2.18"/>
    </reaction>
</comment>
<comment type="cofactor">
    <cofactor evidence="1">
        <name>Mg(2+)</name>
        <dbReference type="ChEBI" id="CHEBI:18420"/>
    </cofactor>
    <text evidence="1">Binds 2 magnesium ions per monomer.</text>
</comment>
<comment type="pathway">
    <text evidence="1">Amino-acid biosynthesis; L-tryptophan biosynthesis; L-tryptophan from chorismate: step 2/5.</text>
</comment>
<comment type="subunit">
    <text evidence="1">Homodimer.</text>
</comment>
<comment type="similarity">
    <text evidence="1">Belongs to the anthranilate phosphoribosyltransferase family.</text>
</comment>
<proteinExistence type="inferred from homology"/>
<dbReference type="EC" id="2.4.2.18" evidence="1"/>
<dbReference type="EMBL" id="CP000319">
    <property type="protein sequence ID" value="ABE62549.1"/>
    <property type="molecule type" value="Genomic_DNA"/>
</dbReference>
<dbReference type="RefSeq" id="WP_011510231.1">
    <property type="nucleotide sequence ID" value="NC_007964.1"/>
</dbReference>
<dbReference type="SMR" id="Q1QMJ8"/>
<dbReference type="STRING" id="323097.Nham_1734"/>
<dbReference type="KEGG" id="nha:Nham_1734"/>
<dbReference type="eggNOG" id="COG0547">
    <property type="taxonomic scope" value="Bacteria"/>
</dbReference>
<dbReference type="HOGENOM" id="CLU_034315_2_1_5"/>
<dbReference type="OrthoDB" id="9806430at2"/>
<dbReference type="UniPathway" id="UPA00035">
    <property type="reaction ID" value="UER00041"/>
</dbReference>
<dbReference type="Proteomes" id="UP000001953">
    <property type="component" value="Chromosome"/>
</dbReference>
<dbReference type="GO" id="GO:0005829">
    <property type="term" value="C:cytosol"/>
    <property type="evidence" value="ECO:0007669"/>
    <property type="project" value="TreeGrafter"/>
</dbReference>
<dbReference type="GO" id="GO:0004048">
    <property type="term" value="F:anthranilate phosphoribosyltransferase activity"/>
    <property type="evidence" value="ECO:0007669"/>
    <property type="project" value="UniProtKB-UniRule"/>
</dbReference>
<dbReference type="GO" id="GO:0000287">
    <property type="term" value="F:magnesium ion binding"/>
    <property type="evidence" value="ECO:0007669"/>
    <property type="project" value="UniProtKB-UniRule"/>
</dbReference>
<dbReference type="GO" id="GO:0000162">
    <property type="term" value="P:L-tryptophan biosynthetic process"/>
    <property type="evidence" value="ECO:0007669"/>
    <property type="project" value="UniProtKB-UniRule"/>
</dbReference>
<dbReference type="FunFam" id="3.40.1030.10:FF:000002">
    <property type="entry name" value="Anthranilate phosphoribosyltransferase"/>
    <property type="match status" value="1"/>
</dbReference>
<dbReference type="Gene3D" id="3.40.1030.10">
    <property type="entry name" value="Nucleoside phosphorylase/phosphoribosyltransferase catalytic domain"/>
    <property type="match status" value="1"/>
</dbReference>
<dbReference type="Gene3D" id="1.20.970.10">
    <property type="entry name" value="Transferase, Pyrimidine Nucleoside Phosphorylase, Chain C"/>
    <property type="match status" value="1"/>
</dbReference>
<dbReference type="HAMAP" id="MF_00211">
    <property type="entry name" value="TrpD"/>
    <property type="match status" value="1"/>
</dbReference>
<dbReference type="InterPro" id="IPR005940">
    <property type="entry name" value="Anthranilate_Pribosyl_Tfrase"/>
</dbReference>
<dbReference type="InterPro" id="IPR000312">
    <property type="entry name" value="Glycosyl_Trfase_fam3"/>
</dbReference>
<dbReference type="InterPro" id="IPR017459">
    <property type="entry name" value="Glycosyl_Trfase_fam3_N_dom"/>
</dbReference>
<dbReference type="InterPro" id="IPR036320">
    <property type="entry name" value="Glycosyl_Trfase_fam3_N_dom_sf"/>
</dbReference>
<dbReference type="InterPro" id="IPR035902">
    <property type="entry name" value="Nuc_phospho_transferase"/>
</dbReference>
<dbReference type="NCBIfam" id="TIGR01245">
    <property type="entry name" value="trpD"/>
    <property type="match status" value="1"/>
</dbReference>
<dbReference type="PANTHER" id="PTHR43285">
    <property type="entry name" value="ANTHRANILATE PHOSPHORIBOSYLTRANSFERASE"/>
    <property type="match status" value="1"/>
</dbReference>
<dbReference type="PANTHER" id="PTHR43285:SF2">
    <property type="entry name" value="ANTHRANILATE PHOSPHORIBOSYLTRANSFERASE"/>
    <property type="match status" value="1"/>
</dbReference>
<dbReference type="Pfam" id="PF02885">
    <property type="entry name" value="Glycos_trans_3N"/>
    <property type="match status" value="1"/>
</dbReference>
<dbReference type="Pfam" id="PF00591">
    <property type="entry name" value="Glycos_transf_3"/>
    <property type="match status" value="1"/>
</dbReference>
<dbReference type="SUPFAM" id="SSF52418">
    <property type="entry name" value="Nucleoside phosphorylase/phosphoribosyltransferase catalytic domain"/>
    <property type="match status" value="1"/>
</dbReference>
<dbReference type="SUPFAM" id="SSF47648">
    <property type="entry name" value="Nucleoside phosphorylase/phosphoribosyltransferase N-terminal domain"/>
    <property type="match status" value="1"/>
</dbReference>
<accession>Q1QMJ8</accession>
<sequence length="337" mass="34262">MDDLKALIGKVATGATLTREEASCAFDSMMSGEATPSQMGGLLMALRVRGETVDEITGAVAAMRSKMLRVTAPADAVDVVGTGGDGSGSVNVSTCASFIVAGAGVPVAKHGNRALSSKSGAADCLAALGIKIDLTPEQVGRCVNEAGIGFMFAPSHHPAMKNVGPTRVELATRTIFNLLGPLSNPAGVTRQMVGVFSRQWVQPLAQVLKNLGSDSVWVVHGSDGLDEITLAGPTFVAALENGNIRSFEVTPEDAGLSRAHGDALKGGDAEANAASLRGVLEGRPGAFRDVALLNAAAALIVAGKAKTLKDGVAFGTTSLDSGAAMNKLKQLIAVSNG</sequence>
<organism>
    <name type="scientific">Nitrobacter hamburgensis (strain DSM 10229 / NCIMB 13809 / X14)</name>
    <dbReference type="NCBI Taxonomy" id="323097"/>
    <lineage>
        <taxon>Bacteria</taxon>
        <taxon>Pseudomonadati</taxon>
        <taxon>Pseudomonadota</taxon>
        <taxon>Alphaproteobacteria</taxon>
        <taxon>Hyphomicrobiales</taxon>
        <taxon>Nitrobacteraceae</taxon>
        <taxon>Nitrobacter</taxon>
    </lineage>
</organism>